<name>XERC_MYCTO</name>
<feature type="chain" id="PRO_0000428608" description="Tyrosine recombinase XerC">
    <location>
        <begin position="1"/>
        <end position="298"/>
    </location>
</feature>
<feature type="domain" description="Core-binding (CB)" evidence="3">
    <location>
        <begin position="1"/>
        <end position="84"/>
    </location>
</feature>
<feature type="domain" description="Tyr recombinase" evidence="2">
    <location>
        <begin position="105"/>
        <end position="292"/>
    </location>
</feature>
<feature type="active site" evidence="2">
    <location>
        <position position="149"/>
    </location>
</feature>
<feature type="active site" evidence="2">
    <location>
        <position position="173"/>
    </location>
</feature>
<feature type="active site" evidence="2">
    <location>
        <position position="244"/>
    </location>
</feature>
<feature type="active site" evidence="2">
    <location>
        <position position="247"/>
    </location>
</feature>
<feature type="active site" evidence="2">
    <location>
        <position position="270"/>
    </location>
</feature>
<feature type="active site" description="O-(3'-phospho-DNA)-tyrosine intermediate" evidence="2">
    <location>
        <position position="279"/>
    </location>
</feature>
<reference key="1">
    <citation type="journal article" date="2002" name="J. Bacteriol.">
        <title>Whole-genome comparison of Mycobacterium tuberculosis clinical and laboratory strains.</title>
        <authorList>
            <person name="Fleischmann R.D."/>
            <person name="Alland D."/>
            <person name="Eisen J.A."/>
            <person name="Carpenter L."/>
            <person name="White O."/>
            <person name="Peterson J.D."/>
            <person name="DeBoy R.T."/>
            <person name="Dodson R.J."/>
            <person name="Gwinn M.L."/>
            <person name="Haft D.H."/>
            <person name="Hickey E.K."/>
            <person name="Kolonay J.F."/>
            <person name="Nelson W.C."/>
            <person name="Umayam L.A."/>
            <person name="Ermolaeva M.D."/>
            <person name="Salzberg S.L."/>
            <person name="Delcher A."/>
            <person name="Utterback T.R."/>
            <person name="Weidman J.F."/>
            <person name="Khouri H.M."/>
            <person name="Gill J."/>
            <person name="Mikula A."/>
            <person name="Bishai W."/>
            <person name="Jacobs W.R. Jr."/>
            <person name="Venter J.C."/>
            <person name="Fraser C.M."/>
        </authorList>
    </citation>
    <scope>NUCLEOTIDE SEQUENCE [LARGE SCALE GENOMIC DNA]</scope>
    <source>
        <strain>CDC 1551 / Oshkosh</strain>
    </source>
</reference>
<evidence type="ECO:0000250" key="1"/>
<evidence type="ECO:0000255" key="2">
    <source>
        <dbReference type="PROSITE-ProRule" id="PRU01246"/>
    </source>
</evidence>
<evidence type="ECO:0000255" key="3">
    <source>
        <dbReference type="PROSITE-ProRule" id="PRU01248"/>
    </source>
</evidence>
<evidence type="ECO:0000305" key="4"/>
<protein>
    <recommendedName>
        <fullName>Tyrosine recombinase XerC</fullName>
    </recommendedName>
</protein>
<accession>P9WF34</accession>
<accession>L0TB67</accession>
<accession>P67628</accession>
<accession>Q10815</accession>
<gene>
    <name type="primary">xerC</name>
    <name type="ordered locus">MT2962</name>
</gene>
<comment type="function">
    <text evidence="1">Site-specific tyrosine recombinase, which acts by catalyzing the cutting and rejoining of the recombining DNA molecules. The XerC-XerD complex is essential to convert dimers of the bacterial chromosome into monomers to permit their segregation at cell division. It also contributes to the segregational stability of plasmids (By similarity).</text>
</comment>
<comment type="subunit">
    <text evidence="1">Forms a cyclic heterotetrameric complex composed of two molecules of XerC and two molecules of XerD.</text>
</comment>
<comment type="subcellular location">
    <subcellularLocation>
        <location evidence="1">Cytoplasm</location>
    </subcellularLocation>
</comment>
<comment type="similarity">
    <text evidence="4">Belongs to the 'phage' integrase family. XerC subfamily.</text>
</comment>
<comment type="sequence caution" evidence="4">
    <conflict type="erroneous initiation">
        <sequence resource="EMBL-CDS" id="AAK47288"/>
    </conflict>
</comment>
<keyword id="KW-0131">Cell cycle</keyword>
<keyword id="KW-0132">Cell division</keyword>
<keyword id="KW-0159">Chromosome partition</keyword>
<keyword id="KW-0963">Cytoplasm</keyword>
<keyword id="KW-0229">DNA integration</keyword>
<keyword id="KW-0233">DNA recombination</keyword>
<keyword id="KW-0238">DNA-binding</keyword>
<keyword id="KW-1185">Reference proteome</keyword>
<sequence length="298" mass="31980">MQAILDEFDEYLALQCGRSVHTRRAYLGDLRSLFAFLADRGSSLDALTLSVLRSWLAATAGAGAARTTLARRTSAVKAFTAWAVRRGLLAGDPAARLQVPKARRTLPAVLRQDQALRAMAAAESGAEQGDPLALRDRLIVELLYATGIRVSELCGLDVDDIDTGHRLVRVLGKGNKQRTVPFGQPAADALHAWLVDGRRALVTAESGHALLLGARGRRLDVRQARTAVHQTVAAVDGAPDMGPHGLRHSAATHLLEGGADLRVVQELLGHSSLATTQLYTHVAVARLRAVHERAHPRA</sequence>
<proteinExistence type="inferred from homology"/>
<organism>
    <name type="scientific">Mycobacterium tuberculosis (strain CDC 1551 / Oshkosh)</name>
    <dbReference type="NCBI Taxonomy" id="83331"/>
    <lineage>
        <taxon>Bacteria</taxon>
        <taxon>Bacillati</taxon>
        <taxon>Actinomycetota</taxon>
        <taxon>Actinomycetes</taxon>
        <taxon>Mycobacteriales</taxon>
        <taxon>Mycobacteriaceae</taxon>
        <taxon>Mycobacterium</taxon>
        <taxon>Mycobacterium tuberculosis complex</taxon>
    </lineage>
</organism>
<dbReference type="EMBL" id="AE000516">
    <property type="protein sequence ID" value="AAK47288.1"/>
    <property type="status" value="ALT_INIT"/>
    <property type="molecule type" value="Genomic_DNA"/>
</dbReference>
<dbReference type="PIR" id="A70926">
    <property type="entry name" value="A70926"/>
</dbReference>
<dbReference type="RefSeq" id="WP_003414689.1">
    <property type="nucleotide sequence ID" value="NZ_KK341227.1"/>
</dbReference>
<dbReference type="SMR" id="P9WF34"/>
<dbReference type="KEGG" id="mtc:MT2962"/>
<dbReference type="PATRIC" id="fig|83331.31.peg.3202"/>
<dbReference type="HOGENOM" id="CLU_027562_9_0_11"/>
<dbReference type="Proteomes" id="UP000001020">
    <property type="component" value="Chromosome"/>
</dbReference>
<dbReference type="GO" id="GO:0005737">
    <property type="term" value="C:cytoplasm"/>
    <property type="evidence" value="ECO:0007669"/>
    <property type="project" value="UniProtKB-SubCell"/>
</dbReference>
<dbReference type="GO" id="GO:0003677">
    <property type="term" value="F:DNA binding"/>
    <property type="evidence" value="ECO:0007669"/>
    <property type="project" value="UniProtKB-KW"/>
</dbReference>
<dbReference type="GO" id="GO:0009037">
    <property type="term" value="F:tyrosine-based site-specific recombinase activity"/>
    <property type="evidence" value="ECO:0007669"/>
    <property type="project" value="UniProtKB-UniRule"/>
</dbReference>
<dbReference type="GO" id="GO:0051301">
    <property type="term" value="P:cell division"/>
    <property type="evidence" value="ECO:0007669"/>
    <property type="project" value="UniProtKB-KW"/>
</dbReference>
<dbReference type="GO" id="GO:0007059">
    <property type="term" value="P:chromosome segregation"/>
    <property type="evidence" value="ECO:0007669"/>
    <property type="project" value="UniProtKB-UniRule"/>
</dbReference>
<dbReference type="GO" id="GO:0006313">
    <property type="term" value="P:DNA transposition"/>
    <property type="evidence" value="ECO:0007669"/>
    <property type="project" value="UniProtKB-UniRule"/>
</dbReference>
<dbReference type="CDD" id="cd00798">
    <property type="entry name" value="INT_XerDC_C"/>
    <property type="match status" value="1"/>
</dbReference>
<dbReference type="FunFam" id="1.10.443.10:FF:000007">
    <property type="entry name" value="Tyrosine recombinase XerC"/>
    <property type="match status" value="1"/>
</dbReference>
<dbReference type="Gene3D" id="1.10.150.130">
    <property type="match status" value="1"/>
</dbReference>
<dbReference type="Gene3D" id="1.10.443.10">
    <property type="entry name" value="Intergrase catalytic core"/>
    <property type="match status" value="1"/>
</dbReference>
<dbReference type="HAMAP" id="MF_01808">
    <property type="entry name" value="Recomb_XerC_XerD"/>
    <property type="match status" value="1"/>
</dbReference>
<dbReference type="InterPro" id="IPR044068">
    <property type="entry name" value="CB"/>
</dbReference>
<dbReference type="InterPro" id="IPR011010">
    <property type="entry name" value="DNA_brk_join_enz"/>
</dbReference>
<dbReference type="InterPro" id="IPR013762">
    <property type="entry name" value="Integrase-like_cat_sf"/>
</dbReference>
<dbReference type="InterPro" id="IPR002104">
    <property type="entry name" value="Integrase_catalytic"/>
</dbReference>
<dbReference type="InterPro" id="IPR010998">
    <property type="entry name" value="Integrase_recombinase_N"/>
</dbReference>
<dbReference type="InterPro" id="IPR004107">
    <property type="entry name" value="Integrase_SAM-like_N"/>
</dbReference>
<dbReference type="InterPro" id="IPR023009">
    <property type="entry name" value="Tyrosine_recombinase_XerC/XerD"/>
</dbReference>
<dbReference type="InterPro" id="IPR050090">
    <property type="entry name" value="Tyrosine_recombinase_XerCD"/>
</dbReference>
<dbReference type="NCBIfam" id="NF001399">
    <property type="entry name" value="PRK00283.1"/>
    <property type="match status" value="1"/>
</dbReference>
<dbReference type="PANTHER" id="PTHR30349">
    <property type="entry name" value="PHAGE INTEGRASE-RELATED"/>
    <property type="match status" value="1"/>
</dbReference>
<dbReference type="PANTHER" id="PTHR30349:SF77">
    <property type="entry name" value="TYROSINE RECOMBINASE XERC"/>
    <property type="match status" value="1"/>
</dbReference>
<dbReference type="Pfam" id="PF02899">
    <property type="entry name" value="Phage_int_SAM_1"/>
    <property type="match status" value="1"/>
</dbReference>
<dbReference type="Pfam" id="PF00589">
    <property type="entry name" value="Phage_integrase"/>
    <property type="match status" value="1"/>
</dbReference>
<dbReference type="SUPFAM" id="SSF56349">
    <property type="entry name" value="DNA breaking-rejoining enzymes"/>
    <property type="match status" value="1"/>
</dbReference>
<dbReference type="PROSITE" id="PS51900">
    <property type="entry name" value="CB"/>
    <property type="match status" value="1"/>
</dbReference>
<dbReference type="PROSITE" id="PS51898">
    <property type="entry name" value="TYR_RECOMBINASE"/>
    <property type="match status" value="1"/>
</dbReference>